<protein>
    <recommendedName>
        <fullName evidence="2">Large ribosomal subunit protein uL23c</fullName>
    </recommendedName>
    <alternativeName>
        <fullName>50S ribosomal protein L23, chloroplastic</fullName>
    </alternativeName>
</protein>
<dbReference type="EMBL" id="U38804">
    <property type="protein sequence ID" value="AAC08198.1"/>
    <property type="molecule type" value="Genomic_DNA"/>
</dbReference>
<dbReference type="PIR" id="S73233">
    <property type="entry name" value="S73233"/>
</dbReference>
<dbReference type="RefSeq" id="NP_053922.2">
    <property type="nucleotide sequence ID" value="NC_000925.1"/>
</dbReference>
<dbReference type="SMR" id="P51312"/>
<dbReference type="GeneID" id="809941"/>
<dbReference type="GO" id="GO:0009507">
    <property type="term" value="C:chloroplast"/>
    <property type="evidence" value="ECO:0007669"/>
    <property type="project" value="UniProtKB-SubCell"/>
</dbReference>
<dbReference type="GO" id="GO:1990904">
    <property type="term" value="C:ribonucleoprotein complex"/>
    <property type="evidence" value="ECO:0007669"/>
    <property type="project" value="UniProtKB-KW"/>
</dbReference>
<dbReference type="GO" id="GO:0005840">
    <property type="term" value="C:ribosome"/>
    <property type="evidence" value="ECO:0007669"/>
    <property type="project" value="UniProtKB-KW"/>
</dbReference>
<dbReference type="GO" id="GO:0019843">
    <property type="term" value="F:rRNA binding"/>
    <property type="evidence" value="ECO:0007669"/>
    <property type="project" value="UniProtKB-UniRule"/>
</dbReference>
<dbReference type="GO" id="GO:0003735">
    <property type="term" value="F:structural constituent of ribosome"/>
    <property type="evidence" value="ECO:0007669"/>
    <property type="project" value="InterPro"/>
</dbReference>
<dbReference type="GO" id="GO:0006412">
    <property type="term" value="P:translation"/>
    <property type="evidence" value="ECO:0007669"/>
    <property type="project" value="UniProtKB-UniRule"/>
</dbReference>
<dbReference type="FunFam" id="3.30.70.330:FF:000001">
    <property type="entry name" value="50S ribosomal protein L23"/>
    <property type="match status" value="1"/>
</dbReference>
<dbReference type="Gene3D" id="3.30.70.330">
    <property type="match status" value="1"/>
</dbReference>
<dbReference type="HAMAP" id="MF_01369_B">
    <property type="entry name" value="Ribosomal_uL23_B"/>
    <property type="match status" value="1"/>
</dbReference>
<dbReference type="InterPro" id="IPR012677">
    <property type="entry name" value="Nucleotide-bd_a/b_plait_sf"/>
</dbReference>
<dbReference type="InterPro" id="IPR013025">
    <property type="entry name" value="Ribosomal_uL23-like"/>
</dbReference>
<dbReference type="InterPro" id="IPR012678">
    <property type="entry name" value="Ribosomal_uL23/eL15/eS24_sf"/>
</dbReference>
<dbReference type="InterPro" id="IPR001014">
    <property type="entry name" value="Ribosomal_uL23_CS"/>
</dbReference>
<dbReference type="NCBIfam" id="NF004363">
    <property type="entry name" value="PRK05738.2-4"/>
    <property type="match status" value="1"/>
</dbReference>
<dbReference type="NCBIfam" id="NF004368">
    <property type="entry name" value="PRK05738.3-4"/>
    <property type="match status" value="1"/>
</dbReference>
<dbReference type="PANTHER" id="PTHR11620">
    <property type="entry name" value="60S RIBOSOMAL PROTEIN L23A"/>
    <property type="match status" value="1"/>
</dbReference>
<dbReference type="Pfam" id="PF00276">
    <property type="entry name" value="Ribosomal_L23"/>
    <property type="match status" value="1"/>
</dbReference>
<dbReference type="SUPFAM" id="SSF54189">
    <property type="entry name" value="Ribosomal proteins S24e, L23 and L15e"/>
    <property type="match status" value="1"/>
</dbReference>
<dbReference type="PROSITE" id="PS00050">
    <property type="entry name" value="RIBOSOMAL_L23"/>
    <property type="match status" value="1"/>
</dbReference>
<feature type="chain" id="PRO_0000129462" description="Large ribosomal subunit protein uL23c">
    <location>
        <begin position="1"/>
        <end position="110"/>
    </location>
</feature>
<gene>
    <name type="primary">rpl23</name>
</gene>
<keyword id="KW-0150">Chloroplast</keyword>
<keyword id="KW-0934">Plastid</keyword>
<keyword id="KW-0687">Ribonucleoprotein</keyword>
<keyword id="KW-0689">Ribosomal protein</keyword>
<keyword id="KW-0694">RNA-binding</keyword>
<keyword id="KW-0699">rRNA-binding</keyword>
<geneLocation type="chloroplast"/>
<proteinExistence type="inferred from homology"/>
<accession>P51312</accession>
<evidence type="ECO:0000250" key="1"/>
<evidence type="ECO:0000305" key="2"/>
<organism>
    <name type="scientific">Porphyra purpurea</name>
    <name type="common">Red seaweed</name>
    <name type="synonym">Ulva purpurea</name>
    <dbReference type="NCBI Taxonomy" id="2787"/>
    <lineage>
        <taxon>Eukaryota</taxon>
        <taxon>Rhodophyta</taxon>
        <taxon>Bangiophyceae</taxon>
        <taxon>Bangiales</taxon>
        <taxon>Bangiaceae</taxon>
        <taxon>Porphyra</taxon>
    </lineage>
</organism>
<reference key="1">
    <citation type="journal article" date="1995" name="Plant Mol. Biol. Rep.">
        <title>Complete nucleotide sequence of the Porphyra purpurea chloroplast genome.</title>
        <authorList>
            <person name="Reith M.E."/>
            <person name="Munholland J."/>
        </authorList>
    </citation>
    <scope>NUCLEOTIDE SEQUENCE [LARGE SCALE GENOMIC DNA]</scope>
    <source>
        <strain>Avonport</strain>
    </source>
</reference>
<name>RK23_PORPU</name>
<sequence>MRYLKYKRYIMDSIDSRDLLDLVKYPIITDKTTKLLEENQYCFAVDPNATKINIKAAIQYIFNVQVTGVNTCHPPKKKRSIGRFIGKRPHYKKAIITLASKDSINLFPET</sequence>
<comment type="function">
    <text evidence="1">Binds to 23S rRNA.</text>
</comment>
<comment type="subunit">
    <text evidence="1">Part of the 50S ribosomal subunit.</text>
</comment>
<comment type="subcellular location">
    <subcellularLocation>
        <location>Plastid</location>
        <location>Chloroplast</location>
    </subcellularLocation>
</comment>
<comment type="similarity">
    <text evidence="2">Belongs to the universal ribosomal protein uL23 family.</text>
</comment>